<evidence type="ECO:0000255" key="1">
    <source>
        <dbReference type="HAMAP-Rule" id="MF_00443"/>
    </source>
</evidence>
<dbReference type="EC" id="2.8.1.10" evidence="1"/>
<dbReference type="EMBL" id="CP000084">
    <property type="protein sequence ID" value="AAZ21549.1"/>
    <property type="molecule type" value="Genomic_DNA"/>
</dbReference>
<dbReference type="RefSeq" id="WP_006997183.1">
    <property type="nucleotide sequence ID" value="NC_007205.1"/>
</dbReference>
<dbReference type="SMR" id="Q4FMP0"/>
<dbReference type="STRING" id="335992.SAR11_0730"/>
<dbReference type="GeneID" id="66295233"/>
<dbReference type="KEGG" id="pub:SAR11_0730"/>
<dbReference type="eggNOG" id="COG2022">
    <property type="taxonomic scope" value="Bacteria"/>
</dbReference>
<dbReference type="HOGENOM" id="CLU_062233_1_0_5"/>
<dbReference type="OrthoDB" id="9805935at2"/>
<dbReference type="UniPathway" id="UPA00060"/>
<dbReference type="Proteomes" id="UP000002528">
    <property type="component" value="Chromosome"/>
</dbReference>
<dbReference type="GO" id="GO:0005737">
    <property type="term" value="C:cytoplasm"/>
    <property type="evidence" value="ECO:0007669"/>
    <property type="project" value="UniProtKB-SubCell"/>
</dbReference>
<dbReference type="GO" id="GO:1990107">
    <property type="term" value="F:thiazole synthase activity"/>
    <property type="evidence" value="ECO:0007669"/>
    <property type="project" value="UniProtKB-EC"/>
</dbReference>
<dbReference type="GO" id="GO:0009229">
    <property type="term" value="P:thiamine diphosphate biosynthetic process"/>
    <property type="evidence" value="ECO:0007669"/>
    <property type="project" value="UniProtKB-UniRule"/>
</dbReference>
<dbReference type="CDD" id="cd04728">
    <property type="entry name" value="ThiG"/>
    <property type="match status" value="1"/>
</dbReference>
<dbReference type="Gene3D" id="3.20.20.70">
    <property type="entry name" value="Aldolase class I"/>
    <property type="match status" value="1"/>
</dbReference>
<dbReference type="HAMAP" id="MF_00443">
    <property type="entry name" value="ThiG"/>
    <property type="match status" value="1"/>
</dbReference>
<dbReference type="InterPro" id="IPR013785">
    <property type="entry name" value="Aldolase_TIM"/>
</dbReference>
<dbReference type="InterPro" id="IPR033983">
    <property type="entry name" value="Thiazole_synthase_ThiG"/>
</dbReference>
<dbReference type="InterPro" id="IPR008867">
    <property type="entry name" value="ThiG"/>
</dbReference>
<dbReference type="PANTHER" id="PTHR34266">
    <property type="entry name" value="THIAZOLE SYNTHASE"/>
    <property type="match status" value="1"/>
</dbReference>
<dbReference type="PANTHER" id="PTHR34266:SF2">
    <property type="entry name" value="THIAZOLE SYNTHASE"/>
    <property type="match status" value="1"/>
</dbReference>
<dbReference type="Pfam" id="PF05690">
    <property type="entry name" value="ThiG"/>
    <property type="match status" value="1"/>
</dbReference>
<dbReference type="SUPFAM" id="SSF110399">
    <property type="entry name" value="ThiG-like"/>
    <property type="match status" value="1"/>
</dbReference>
<gene>
    <name evidence="1" type="primary">thiG</name>
    <name type="ordered locus">SAR11_0730</name>
</gene>
<accession>Q4FMP0</accession>
<sequence length="257" mass="27819">MVNDKLIIDKKKFNSRLIVGTGKYKSMAECAKAIKLSGAEIVTVAVRRVNISDKKKPLLMDYIDPKKITYLPNTAGCFNSEEALRTLRLAREIGGWKLVKLEVLGDKKNLFPDMIETLKSTEVLTREGFRVMVYCNDDPLMAKRLENVGACAIMPLAAPIGSGLGIQNTTNIKIIRSQTKLPLIIDAGLGQASDAAIAMELGCDGVLANTAIAKAKKPFQMALAFKNGVIAGRQSYLAGRIEKSIYGSASSPKTGII</sequence>
<comment type="function">
    <text evidence="1">Catalyzes the rearrangement of 1-deoxy-D-xylulose 5-phosphate (DXP) to produce the thiazole phosphate moiety of thiamine. Sulfur is provided by the thiocarboxylate moiety of the carrier protein ThiS. In vitro, sulfur can be provided by H(2)S.</text>
</comment>
<comment type="catalytic activity">
    <reaction evidence="1">
        <text>[ThiS sulfur-carrier protein]-C-terminal-Gly-aminoethanethioate + 2-iminoacetate + 1-deoxy-D-xylulose 5-phosphate = [ThiS sulfur-carrier protein]-C-terminal Gly-Gly + 2-[(2R,5Z)-2-carboxy-4-methylthiazol-5(2H)-ylidene]ethyl phosphate + 2 H2O + H(+)</text>
        <dbReference type="Rhea" id="RHEA:26297"/>
        <dbReference type="Rhea" id="RHEA-COMP:12909"/>
        <dbReference type="Rhea" id="RHEA-COMP:19908"/>
        <dbReference type="ChEBI" id="CHEBI:15377"/>
        <dbReference type="ChEBI" id="CHEBI:15378"/>
        <dbReference type="ChEBI" id="CHEBI:57792"/>
        <dbReference type="ChEBI" id="CHEBI:62899"/>
        <dbReference type="ChEBI" id="CHEBI:77846"/>
        <dbReference type="ChEBI" id="CHEBI:90778"/>
        <dbReference type="ChEBI" id="CHEBI:232372"/>
        <dbReference type="EC" id="2.8.1.10"/>
    </reaction>
</comment>
<comment type="pathway">
    <text evidence="1">Cofactor biosynthesis; thiamine diphosphate biosynthesis.</text>
</comment>
<comment type="subunit">
    <text evidence="1">Homotetramer. Forms heterodimers with either ThiH or ThiS.</text>
</comment>
<comment type="subcellular location">
    <subcellularLocation>
        <location evidence="1">Cytoplasm</location>
    </subcellularLocation>
</comment>
<comment type="similarity">
    <text evidence="1">Belongs to the ThiG family.</text>
</comment>
<organism>
    <name type="scientific">Pelagibacter ubique (strain HTCC1062)</name>
    <dbReference type="NCBI Taxonomy" id="335992"/>
    <lineage>
        <taxon>Bacteria</taxon>
        <taxon>Pseudomonadati</taxon>
        <taxon>Pseudomonadota</taxon>
        <taxon>Alphaproteobacteria</taxon>
        <taxon>Candidatus Pelagibacterales</taxon>
        <taxon>Candidatus Pelagibacteraceae</taxon>
        <taxon>Candidatus Pelagibacter</taxon>
    </lineage>
</organism>
<protein>
    <recommendedName>
        <fullName evidence="1">Thiazole synthase</fullName>
        <ecNumber evidence="1">2.8.1.10</ecNumber>
    </recommendedName>
</protein>
<keyword id="KW-0963">Cytoplasm</keyword>
<keyword id="KW-1185">Reference proteome</keyword>
<keyword id="KW-0704">Schiff base</keyword>
<keyword id="KW-0784">Thiamine biosynthesis</keyword>
<keyword id="KW-0808">Transferase</keyword>
<proteinExistence type="inferred from homology"/>
<feature type="chain" id="PRO_0000236350" description="Thiazole synthase">
    <location>
        <begin position="1"/>
        <end position="257"/>
    </location>
</feature>
<feature type="active site" description="Schiff-base intermediate with DXP" evidence="1">
    <location>
        <position position="100"/>
    </location>
</feature>
<feature type="binding site" evidence="1">
    <location>
        <position position="161"/>
    </location>
    <ligand>
        <name>1-deoxy-D-xylulose 5-phosphate</name>
        <dbReference type="ChEBI" id="CHEBI:57792"/>
    </ligand>
</feature>
<feature type="binding site" evidence="1">
    <location>
        <begin position="187"/>
        <end position="188"/>
    </location>
    <ligand>
        <name>1-deoxy-D-xylulose 5-phosphate</name>
        <dbReference type="ChEBI" id="CHEBI:57792"/>
    </ligand>
</feature>
<feature type="binding site" evidence="1">
    <location>
        <begin position="209"/>
        <end position="210"/>
    </location>
    <ligand>
        <name>1-deoxy-D-xylulose 5-phosphate</name>
        <dbReference type="ChEBI" id="CHEBI:57792"/>
    </ligand>
</feature>
<name>THIG_PELUB</name>
<reference key="1">
    <citation type="journal article" date="2005" name="Science">
        <title>Genome streamlining in a cosmopolitan oceanic bacterium.</title>
        <authorList>
            <person name="Giovannoni S.J."/>
            <person name="Tripp H.J."/>
            <person name="Givan S."/>
            <person name="Podar M."/>
            <person name="Vergin K.L."/>
            <person name="Baptista D."/>
            <person name="Bibbs L."/>
            <person name="Eads J."/>
            <person name="Richardson T.H."/>
            <person name="Noordewier M."/>
            <person name="Rappe M.S."/>
            <person name="Short J.M."/>
            <person name="Carrington J.C."/>
            <person name="Mathur E.J."/>
        </authorList>
    </citation>
    <scope>NUCLEOTIDE SEQUENCE [LARGE SCALE GENOMIC DNA]</scope>
    <source>
        <strain>HTCC1062</strain>
    </source>
</reference>